<reference key="1">
    <citation type="journal article" date="2000" name="Science">
        <title>Complete genome sequence of Neisseria meningitidis serogroup B strain MC58.</title>
        <authorList>
            <person name="Tettelin H."/>
            <person name="Saunders N.J."/>
            <person name="Heidelberg J.F."/>
            <person name="Jeffries A.C."/>
            <person name="Nelson K.E."/>
            <person name="Eisen J.A."/>
            <person name="Ketchum K.A."/>
            <person name="Hood D.W."/>
            <person name="Peden J.F."/>
            <person name="Dodson R.J."/>
            <person name="Nelson W.C."/>
            <person name="Gwinn M.L."/>
            <person name="DeBoy R.T."/>
            <person name="Peterson J.D."/>
            <person name="Hickey E.K."/>
            <person name="Haft D.H."/>
            <person name="Salzberg S.L."/>
            <person name="White O."/>
            <person name="Fleischmann R.D."/>
            <person name="Dougherty B.A."/>
            <person name="Mason T.M."/>
            <person name="Ciecko A."/>
            <person name="Parksey D.S."/>
            <person name="Blair E."/>
            <person name="Cittone H."/>
            <person name="Clark E.B."/>
            <person name="Cotton M.D."/>
            <person name="Utterback T.R."/>
            <person name="Khouri H.M."/>
            <person name="Qin H."/>
            <person name="Vamathevan J.J."/>
            <person name="Gill J."/>
            <person name="Scarlato V."/>
            <person name="Masignani V."/>
            <person name="Pizza M."/>
            <person name="Grandi G."/>
            <person name="Sun L."/>
            <person name="Smith H.O."/>
            <person name="Fraser C.M."/>
            <person name="Moxon E.R."/>
            <person name="Rappuoli R."/>
            <person name="Venter J.C."/>
        </authorList>
    </citation>
    <scope>NUCLEOTIDE SEQUENCE [LARGE SCALE GENOMIC DNA]</scope>
    <source>
        <strain>ATCC BAA-335 / MC58</strain>
    </source>
</reference>
<gene>
    <name evidence="1" type="primary">metG</name>
    <name type="ordered locus">NMB0030</name>
</gene>
<comment type="function">
    <text evidence="1">Is required not only for elongation of protein synthesis but also for the initiation of all mRNA translation through initiator tRNA(fMet) aminoacylation.</text>
</comment>
<comment type="catalytic activity">
    <reaction evidence="1">
        <text>tRNA(Met) + L-methionine + ATP = L-methionyl-tRNA(Met) + AMP + diphosphate</text>
        <dbReference type="Rhea" id="RHEA:13481"/>
        <dbReference type="Rhea" id="RHEA-COMP:9667"/>
        <dbReference type="Rhea" id="RHEA-COMP:9698"/>
        <dbReference type="ChEBI" id="CHEBI:30616"/>
        <dbReference type="ChEBI" id="CHEBI:33019"/>
        <dbReference type="ChEBI" id="CHEBI:57844"/>
        <dbReference type="ChEBI" id="CHEBI:78442"/>
        <dbReference type="ChEBI" id="CHEBI:78530"/>
        <dbReference type="ChEBI" id="CHEBI:456215"/>
        <dbReference type="EC" id="6.1.1.10"/>
    </reaction>
</comment>
<comment type="cofactor">
    <cofactor evidence="1">
        <name>Zn(2+)</name>
        <dbReference type="ChEBI" id="CHEBI:29105"/>
    </cofactor>
    <text evidence="1">Binds 1 zinc ion per subunit.</text>
</comment>
<comment type="subunit">
    <text evidence="1">Homodimer.</text>
</comment>
<comment type="subcellular location">
    <subcellularLocation>
        <location evidence="1">Cytoplasm</location>
    </subcellularLocation>
</comment>
<comment type="similarity">
    <text evidence="1">Belongs to the class-I aminoacyl-tRNA synthetase family. MetG type 1 subfamily.</text>
</comment>
<organism>
    <name type="scientific">Neisseria meningitidis serogroup B (strain ATCC BAA-335 / MC58)</name>
    <dbReference type="NCBI Taxonomy" id="122586"/>
    <lineage>
        <taxon>Bacteria</taxon>
        <taxon>Pseudomonadati</taxon>
        <taxon>Pseudomonadota</taxon>
        <taxon>Betaproteobacteria</taxon>
        <taxon>Neisseriales</taxon>
        <taxon>Neisseriaceae</taxon>
        <taxon>Neisseria</taxon>
    </lineage>
</organism>
<dbReference type="EC" id="6.1.1.10" evidence="1"/>
<dbReference type="EMBL" id="AE002098">
    <property type="protein sequence ID" value="AAF40501.1"/>
    <property type="molecule type" value="Genomic_DNA"/>
</dbReference>
<dbReference type="PIR" id="A81246">
    <property type="entry name" value="A81246"/>
</dbReference>
<dbReference type="RefSeq" id="NP_273096.1">
    <property type="nucleotide sequence ID" value="NC_003112.2"/>
</dbReference>
<dbReference type="RefSeq" id="WP_002225763.1">
    <property type="nucleotide sequence ID" value="NC_003112.2"/>
</dbReference>
<dbReference type="SMR" id="Q9K1Q0"/>
<dbReference type="FunCoup" id="Q9K1Q0">
    <property type="interactions" value="503"/>
</dbReference>
<dbReference type="STRING" id="122586.NMB0030"/>
<dbReference type="PaxDb" id="122586-NMB0030"/>
<dbReference type="KEGG" id="nme:NMB0030"/>
<dbReference type="PATRIC" id="fig|122586.8.peg.41"/>
<dbReference type="HOGENOM" id="CLU_009710_7_0_4"/>
<dbReference type="InParanoid" id="Q9K1Q0"/>
<dbReference type="OrthoDB" id="9810191at2"/>
<dbReference type="Proteomes" id="UP000000425">
    <property type="component" value="Chromosome"/>
</dbReference>
<dbReference type="GO" id="GO:0005737">
    <property type="term" value="C:cytoplasm"/>
    <property type="evidence" value="ECO:0007669"/>
    <property type="project" value="UniProtKB-SubCell"/>
</dbReference>
<dbReference type="GO" id="GO:0005524">
    <property type="term" value="F:ATP binding"/>
    <property type="evidence" value="ECO:0007669"/>
    <property type="project" value="UniProtKB-UniRule"/>
</dbReference>
<dbReference type="GO" id="GO:0046872">
    <property type="term" value="F:metal ion binding"/>
    <property type="evidence" value="ECO:0007669"/>
    <property type="project" value="UniProtKB-KW"/>
</dbReference>
<dbReference type="GO" id="GO:0004825">
    <property type="term" value="F:methionine-tRNA ligase activity"/>
    <property type="evidence" value="ECO:0000318"/>
    <property type="project" value="GO_Central"/>
</dbReference>
<dbReference type="GO" id="GO:0000049">
    <property type="term" value="F:tRNA binding"/>
    <property type="evidence" value="ECO:0007669"/>
    <property type="project" value="UniProtKB-KW"/>
</dbReference>
<dbReference type="GO" id="GO:0006431">
    <property type="term" value="P:methionyl-tRNA aminoacylation"/>
    <property type="evidence" value="ECO:0000318"/>
    <property type="project" value="GO_Central"/>
</dbReference>
<dbReference type="CDD" id="cd07957">
    <property type="entry name" value="Anticodon_Ia_Met"/>
    <property type="match status" value="1"/>
</dbReference>
<dbReference type="CDD" id="cd00814">
    <property type="entry name" value="MetRS_core"/>
    <property type="match status" value="1"/>
</dbReference>
<dbReference type="CDD" id="cd02800">
    <property type="entry name" value="tRNA_bind_EcMetRS_like"/>
    <property type="match status" value="1"/>
</dbReference>
<dbReference type="FunFam" id="1.10.730.10:FF:000005">
    <property type="entry name" value="Methionine--tRNA ligase"/>
    <property type="match status" value="1"/>
</dbReference>
<dbReference type="FunFam" id="2.20.28.20:FF:000001">
    <property type="entry name" value="Methionine--tRNA ligase"/>
    <property type="match status" value="1"/>
</dbReference>
<dbReference type="FunFam" id="2.40.50.140:FF:000042">
    <property type="entry name" value="Methionine--tRNA ligase"/>
    <property type="match status" value="1"/>
</dbReference>
<dbReference type="Gene3D" id="3.40.50.620">
    <property type="entry name" value="HUPs"/>
    <property type="match status" value="1"/>
</dbReference>
<dbReference type="Gene3D" id="1.10.730.10">
    <property type="entry name" value="Isoleucyl-tRNA Synthetase, Domain 1"/>
    <property type="match status" value="1"/>
</dbReference>
<dbReference type="Gene3D" id="2.20.28.20">
    <property type="entry name" value="Methionyl-tRNA synthetase, Zn-domain"/>
    <property type="match status" value="1"/>
</dbReference>
<dbReference type="Gene3D" id="2.40.50.140">
    <property type="entry name" value="Nucleic acid-binding proteins"/>
    <property type="match status" value="1"/>
</dbReference>
<dbReference type="HAMAP" id="MF_00098">
    <property type="entry name" value="Met_tRNA_synth_type1"/>
    <property type="match status" value="1"/>
</dbReference>
<dbReference type="InterPro" id="IPR001412">
    <property type="entry name" value="aa-tRNA-synth_I_CS"/>
</dbReference>
<dbReference type="InterPro" id="IPR041872">
    <property type="entry name" value="Anticodon_Met"/>
</dbReference>
<dbReference type="InterPro" id="IPR004495">
    <property type="entry name" value="Met-tRNA-synth_bsu_C"/>
</dbReference>
<dbReference type="InterPro" id="IPR023458">
    <property type="entry name" value="Met-tRNA_ligase_1"/>
</dbReference>
<dbReference type="InterPro" id="IPR014758">
    <property type="entry name" value="Met-tRNA_synth"/>
</dbReference>
<dbReference type="InterPro" id="IPR015413">
    <property type="entry name" value="Methionyl/Leucyl_tRNA_Synth"/>
</dbReference>
<dbReference type="InterPro" id="IPR033911">
    <property type="entry name" value="MetRS_core"/>
</dbReference>
<dbReference type="InterPro" id="IPR029038">
    <property type="entry name" value="MetRS_Zn"/>
</dbReference>
<dbReference type="InterPro" id="IPR012340">
    <property type="entry name" value="NA-bd_OB-fold"/>
</dbReference>
<dbReference type="InterPro" id="IPR014729">
    <property type="entry name" value="Rossmann-like_a/b/a_fold"/>
</dbReference>
<dbReference type="InterPro" id="IPR002547">
    <property type="entry name" value="tRNA-bd_dom"/>
</dbReference>
<dbReference type="InterPro" id="IPR009080">
    <property type="entry name" value="tRNAsynth_Ia_anticodon-bd"/>
</dbReference>
<dbReference type="NCBIfam" id="TIGR00398">
    <property type="entry name" value="metG"/>
    <property type="match status" value="1"/>
</dbReference>
<dbReference type="NCBIfam" id="TIGR00399">
    <property type="entry name" value="metG_C_term"/>
    <property type="match status" value="1"/>
</dbReference>
<dbReference type="NCBIfam" id="NF001100">
    <property type="entry name" value="PRK00133.1"/>
    <property type="match status" value="1"/>
</dbReference>
<dbReference type="PANTHER" id="PTHR45765">
    <property type="entry name" value="METHIONINE--TRNA LIGASE"/>
    <property type="match status" value="1"/>
</dbReference>
<dbReference type="PANTHER" id="PTHR45765:SF1">
    <property type="entry name" value="METHIONINE--TRNA LIGASE, CYTOPLASMIC"/>
    <property type="match status" value="1"/>
</dbReference>
<dbReference type="Pfam" id="PF19303">
    <property type="entry name" value="Anticodon_3"/>
    <property type="match status" value="1"/>
</dbReference>
<dbReference type="Pfam" id="PF09334">
    <property type="entry name" value="tRNA-synt_1g"/>
    <property type="match status" value="1"/>
</dbReference>
<dbReference type="Pfam" id="PF01588">
    <property type="entry name" value="tRNA_bind"/>
    <property type="match status" value="1"/>
</dbReference>
<dbReference type="PRINTS" id="PR01041">
    <property type="entry name" value="TRNASYNTHMET"/>
</dbReference>
<dbReference type="SUPFAM" id="SSF47323">
    <property type="entry name" value="Anticodon-binding domain of a subclass of class I aminoacyl-tRNA synthetases"/>
    <property type="match status" value="1"/>
</dbReference>
<dbReference type="SUPFAM" id="SSF57770">
    <property type="entry name" value="Methionyl-tRNA synthetase (MetRS), Zn-domain"/>
    <property type="match status" value="1"/>
</dbReference>
<dbReference type="SUPFAM" id="SSF50249">
    <property type="entry name" value="Nucleic acid-binding proteins"/>
    <property type="match status" value="1"/>
</dbReference>
<dbReference type="SUPFAM" id="SSF52374">
    <property type="entry name" value="Nucleotidylyl transferase"/>
    <property type="match status" value="1"/>
</dbReference>
<dbReference type="PROSITE" id="PS00178">
    <property type="entry name" value="AA_TRNA_LIGASE_I"/>
    <property type="match status" value="1"/>
</dbReference>
<dbReference type="PROSITE" id="PS50886">
    <property type="entry name" value="TRBD"/>
    <property type="match status" value="1"/>
</dbReference>
<sequence>MTRKILVTSALPYANGSIHLGHMVEHIQTDVWVRFQKLRGHACHYCCADDTHGTPVMLAAQKQGIAPEDMIAKVREEHLADFTGFFIGYDNYYSTHSPENKQFSQDIYRALKANGKIESRVIEQLFDPEKQMFLPDRFVKGECPKCHAQDQYGDNCEVCGTTYSPTELINPYSAVSGTKPELRESEHFFFKLGECADFLKAWTSGNNPHDGKPHLQAEALNKMKEWLGEGEETTLSDWDISRDAPYFGFEIPDAPGKYFYVWLDAPVGYMASFKNLCDRIGVDFDEYFKADSQTEMYHFIGKDILYFHALFWPAMLHFSGHRAPTGVYAHGFLTVDGQKMSKSRGTFITAKSYLEQGLNPEWMRYYIAAKLNSKIEDIDLNLQDFISRVNSDLVGKYVNIAARASGFIAKRFEGRLKDVADSELLAKLTAQSEAIAECYESREYAKALRDIMALADIVNEYVDANKPWELAKQEGQDERLHEVCSELINAFTMLTAYLAPVLPQTAANAAKFLNLEAITWANTRDTLGKHAINKYEHLMQRVEQKQVDDLIEANKQSIAAAAAPAAEEGKYEKVAEQASFDDFMKIDMRVAKVLNCEAVEGSTKLLKFDLDFGFEKRIIFSGIAASYPNPAELNGRMVIAVANFAPRKMAKFGVSEGMILSAATADGKLKLLDVDTGAQPGDKVG</sequence>
<proteinExistence type="inferred from homology"/>
<protein>
    <recommendedName>
        <fullName evidence="1">Methionine--tRNA ligase</fullName>
        <ecNumber evidence="1">6.1.1.10</ecNumber>
    </recommendedName>
    <alternativeName>
        <fullName evidence="1">Methionyl-tRNA synthetase</fullName>
        <shortName evidence="1">MetRS</shortName>
    </alternativeName>
</protein>
<name>SYM_NEIMB</name>
<feature type="chain" id="PRO_0000139146" description="Methionine--tRNA ligase">
    <location>
        <begin position="1"/>
        <end position="685"/>
    </location>
</feature>
<feature type="domain" description="tRNA-binding" evidence="1">
    <location>
        <begin position="582"/>
        <end position="685"/>
    </location>
</feature>
<feature type="short sequence motif" description="'HIGH' region">
    <location>
        <begin position="12"/>
        <end position="22"/>
    </location>
</feature>
<feature type="short sequence motif" description="'KMSKS' region">
    <location>
        <begin position="339"/>
        <end position="343"/>
    </location>
</feature>
<feature type="binding site" evidence="1">
    <location>
        <position position="143"/>
    </location>
    <ligand>
        <name>Zn(2+)</name>
        <dbReference type="ChEBI" id="CHEBI:29105"/>
    </ligand>
</feature>
<feature type="binding site" evidence="1">
    <location>
        <position position="146"/>
    </location>
    <ligand>
        <name>Zn(2+)</name>
        <dbReference type="ChEBI" id="CHEBI:29105"/>
    </ligand>
</feature>
<feature type="binding site" evidence="1">
    <location>
        <position position="156"/>
    </location>
    <ligand>
        <name>Zn(2+)</name>
        <dbReference type="ChEBI" id="CHEBI:29105"/>
    </ligand>
</feature>
<feature type="binding site" evidence="1">
    <location>
        <position position="159"/>
    </location>
    <ligand>
        <name>Zn(2+)</name>
        <dbReference type="ChEBI" id="CHEBI:29105"/>
    </ligand>
</feature>
<feature type="binding site" evidence="1">
    <location>
        <position position="342"/>
    </location>
    <ligand>
        <name>ATP</name>
        <dbReference type="ChEBI" id="CHEBI:30616"/>
    </ligand>
</feature>
<accession>Q9K1Q0</accession>
<keyword id="KW-0030">Aminoacyl-tRNA synthetase</keyword>
<keyword id="KW-0067">ATP-binding</keyword>
<keyword id="KW-0963">Cytoplasm</keyword>
<keyword id="KW-0436">Ligase</keyword>
<keyword id="KW-0479">Metal-binding</keyword>
<keyword id="KW-0547">Nucleotide-binding</keyword>
<keyword id="KW-0648">Protein biosynthesis</keyword>
<keyword id="KW-1185">Reference proteome</keyword>
<keyword id="KW-0694">RNA-binding</keyword>
<keyword id="KW-0820">tRNA-binding</keyword>
<keyword id="KW-0862">Zinc</keyword>
<evidence type="ECO:0000255" key="1">
    <source>
        <dbReference type="HAMAP-Rule" id="MF_00098"/>
    </source>
</evidence>